<organism>
    <name type="scientific">Rattus norvegicus</name>
    <name type="common">Rat</name>
    <dbReference type="NCBI Taxonomy" id="10116"/>
    <lineage>
        <taxon>Eukaryota</taxon>
        <taxon>Metazoa</taxon>
        <taxon>Chordata</taxon>
        <taxon>Craniata</taxon>
        <taxon>Vertebrata</taxon>
        <taxon>Euteleostomi</taxon>
        <taxon>Mammalia</taxon>
        <taxon>Eutheria</taxon>
        <taxon>Euarchontoglires</taxon>
        <taxon>Glires</taxon>
        <taxon>Rodentia</taxon>
        <taxon>Myomorpha</taxon>
        <taxon>Muroidea</taxon>
        <taxon>Muridae</taxon>
        <taxon>Murinae</taxon>
        <taxon>Rattus</taxon>
    </lineage>
</organism>
<feature type="chain" id="PRO_0000310993" description="Uncharacterized protein C7orf57 homolog">
    <location>
        <begin position="1"/>
        <end position="292"/>
    </location>
</feature>
<feature type="region of interest" description="Disordered" evidence="3">
    <location>
        <begin position="29"/>
        <end position="50"/>
    </location>
</feature>
<feature type="region of interest" description="Disordered" evidence="3">
    <location>
        <begin position="166"/>
        <end position="292"/>
    </location>
</feature>
<feature type="compositionally biased region" description="Polar residues" evidence="3">
    <location>
        <begin position="176"/>
        <end position="189"/>
    </location>
</feature>
<feature type="compositionally biased region" description="Polar residues" evidence="3">
    <location>
        <begin position="208"/>
        <end position="217"/>
    </location>
</feature>
<feature type="compositionally biased region" description="Basic and acidic residues" evidence="3">
    <location>
        <begin position="221"/>
        <end position="239"/>
    </location>
</feature>
<feature type="compositionally biased region" description="Polar residues" evidence="3">
    <location>
        <begin position="240"/>
        <end position="250"/>
    </location>
</feature>
<feature type="compositionally biased region" description="Polar residues" evidence="3">
    <location>
        <begin position="260"/>
        <end position="270"/>
    </location>
</feature>
<feature type="modified residue" description="Phosphoserine" evidence="2">
    <location>
        <position position="50"/>
    </location>
</feature>
<name>CG057_RAT</name>
<evidence type="ECO:0000250" key="1"/>
<evidence type="ECO:0000250" key="2">
    <source>
        <dbReference type="UniProtKB" id="Q5SS90"/>
    </source>
</evidence>
<evidence type="ECO:0000256" key="3">
    <source>
        <dbReference type="SAM" id="MobiDB-lite"/>
    </source>
</evidence>
<sequence>MRNTSKEVQSTSYRYAPCDWYYHLPVKRSEKPVGAPPASQIPGLSDLRDSPSVNLPRARRYWIKETDSEYVKLAKQGGRPDLLKHFAPGTRQGSPVAYSLPDWYIHHSKPPTSLQREVPAVSIPEYMVYEEFNPDQANGSYESRQGPFDFDRKTIWQREAEELENVKRKVKLPAINSKNSSKAGTPVNNKDSDKSRLSLPPMPGPKTGSPTNFSKLISNGYKDEWLQQQKADSDRRTPKTSEASVSTQSTEDSKSKSSQDTETPQNSETPEGSEKTPDAEAPPSEATPEELK</sequence>
<keyword id="KW-0597">Phosphoprotein</keyword>
<keyword id="KW-1185">Reference proteome</keyword>
<protein>
    <recommendedName>
        <fullName>Uncharacterized protein C7orf57 homolog</fullName>
    </recommendedName>
</protein>
<comment type="PTM">
    <text evidence="1">Phosphorylated upon DNA damage.</text>
</comment>
<accession>A0JPQ1</accession>
<proteinExistence type="evidence at transcript level"/>
<dbReference type="EMBL" id="BC127536">
    <property type="protein sequence ID" value="AAI27537.1"/>
    <property type="molecule type" value="mRNA"/>
</dbReference>
<dbReference type="RefSeq" id="NP_001129387.1">
    <property type="nucleotide sequence ID" value="NM_001135915.1"/>
</dbReference>
<dbReference type="FunCoup" id="A0JPQ1">
    <property type="interactions" value="421"/>
</dbReference>
<dbReference type="GlyGen" id="A0JPQ1">
    <property type="glycosylation" value="1 site"/>
</dbReference>
<dbReference type="PhosphoSitePlus" id="A0JPQ1"/>
<dbReference type="PaxDb" id="10116-ENSRNOP00000031005"/>
<dbReference type="Ensembl" id="ENSRNOT00000113242.1">
    <property type="protein sequence ID" value="ENSRNOP00000082043.1"/>
    <property type="gene ID" value="ENSRNOG00000037632.4"/>
</dbReference>
<dbReference type="GeneID" id="688553"/>
<dbReference type="KEGG" id="rno:688553"/>
<dbReference type="UCSC" id="RGD:1587626">
    <property type="organism name" value="rat"/>
</dbReference>
<dbReference type="AGR" id="RGD:1587626"/>
<dbReference type="CTD" id="688553"/>
<dbReference type="RGD" id="1587626">
    <property type="gene designation" value="C14h7orf57"/>
</dbReference>
<dbReference type="eggNOG" id="ENOG502S6DP">
    <property type="taxonomic scope" value="Eukaryota"/>
</dbReference>
<dbReference type="GeneTree" id="ENSGT00390000014376"/>
<dbReference type="HOGENOM" id="CLU_066025_0_0_1"/>
<dbReference type="InParanoid" id="A0JPQ1"/>
<dbReference type="OrthoDB" id="59401at9989"/>
<dbReference type="PhylomeDB" id="A0JPQ1"/>
<dbReference type="TreeFam" id="TF330795"/>
<dbReference type="PRO" id="PR:A0JPQ1"/>
<dbReference type="Proteomes" id="UP000002494">
    <property type="component" value="Chromosome 14"/>
</dbReference>
<dbReference type="Bgee" id="ENSRNOG00000037632">
    <property type="expression patterns" value="Expressed in kidney and 17 other cell types or tissues"/>
</dbReference>
<dbReference type="InterPro" id="IPR040247">
    <property type="entry name" value="DUF5524"/>
</dbReference>
<dbReference type="PANTHER" id="PTHR31097:SF2">
    <property type="entry name" value="CHROMOSOME 7 OPEN READING FRAME 57"/>
    <property type="match status" value="1"/>
</dbReference>
<dbReference type="PANTHER" id="PTHR31097">
    <property type="entry name" value="SI:DKEY-276J7.1"/>
    <property type="match status" value="1"/>
</dbReference>
<dbReference type="Pfam" id="PF17662">
    <property type="entry name" value="DUF5524"/>
    <property type="match status" value="1"/>
</dbReference>
<reference key="1">
    <citation type="journal article" date="2004" name="Genome Res.">
        <title>The status, quality, and expansion of the NIH full-length cDNA project: the Mammalian Gene Collection (MGC).</title>
        <authorList>
            <consortium name="The MGC Project Team"/>
        </authorList>
    </citation>
    <scope>NUCLEOTIDE SEQUENCE [LARGE SCALE MRNA]</scope>
    <source>
        <tissue>Testis</tissue>
    </source>
</reference>